<comment type="function">
    <text evidence="2 5 10 11">ATP-gated nonselective transmembrane cation channel permeable to potassium, sodium and calcium (PubMed:10440098, PubMed:8961184, PubMed:9119082). Activation by extracellular ATP induces a variety of cellular responses, such as excitatory postsynaptic responses in sensory neurons, neuromuscular junctions (NMJ) formation, hearing, perception of taste and peristalsis. In the inner ear, regulates sound transduction and auditory neurotransmission, outer hair cell electromotility, inner ear gap junctions, and K(+) recycling. Mediates synaptic transmission between neurons and from neurons to smooth muscle (By similarity).</text>
</comment>
<comment type="catalytic activity">
    <reaction evidence="5 10">
        <text>Ca(2+)(in) = Ca(2+)(out)</text>
        <dbReference type="Rhea" id="RHEA:29671"/>
        <dbReference type="ChEBI" id="CHEBI:29108"/>
    </reaction>
</comment>
<comment type="catalytic activity">
    <reaction evidence="10">
        <text>K(+)(in) = K(+)(out)</text>
        <dbReference type="Rhea" id="RHEA:29463"/>
        <dbReference type="ChEBI" id="CHEBI:29103"/>
    </reaction>
</comment>
<comment type="catalytic activity">
    <reaction evidence="10">
        <text>Na(+)(in) = Na(+)(out)</text>
        <dbReference type="Rhea" id="RHEA:34963"/>
        <dbReference type="ChEBI" id="CHEBI:29101"/>
    </reaction>
</comment>
<comment type="activity regulation">
    <text evidence="2 5 11">Fast activation by external ATP (PubMed:10440098, PubMed:9119082). Exhibits slow desensitization during prolonged ATP activation (PubMed:10440098, PubMed:9119082). Not sensitive to the ATP agonist:alpha/beta-methylene-ATP (By similarity).</text>
</comment>
<comment type="subunit">
    <text evidence="6 8 9">Homotrimer and heterotrimer; functional P2XRs are organized as homomeric and heteromeric trimers (PubMed:11181939, PubMed:15313628). Homotrimer (PubMed:15313628). Forms heterotrimer with P2RX1 (PubMed:15313628). Forms heterotrimer with P2RX6 (PubMed:17449665). Forms heterotrimer with P2RX3 (PubMed:11181939).</text>
</comment>
<comment type="interaction">
    <interactant intactId="EBI-9511543">
        <id>P49653</id>
    </interactant>
    <interactant intactId="EBI-9511617">
        <id>P51577</id>
        <label>P2rx4</label>
    </interactant>
    <organismsDiffer>false</organismsDiffer>
    <experiments>4</experiments>
</comment>
<comment type="interaction">
    <interactant intactId="EBI-9511543">
        <id>P49653</id>
    </interactant>
    <interactant intactId="EBI-9511515">
        <id>P51579</id>
        <label>P2rx6</label>
    </interactant>
    <organismsDiffer>false</organismsDiffer>
    <experiments>4</experiments>
</comment>
<comment type="interaction">
    <interactant intactId="EBI-15757407">
        <id>P49653-1</id>
    </interactant>
    <interactant intactId="EBI-15757407">
        <id>P49653-1</id>
        <label>P2rx2</label>
    </interactant>
    <organismsDiffer>false</organismsDiffer>
    <experiments>3</experiments>
</comment>
<comment type="subcellular location">
    <subcellularLocation>
        <location evidence="8">Cell membrane</location>
        <topology evidence="1">Multi-pass membrane protein</topology>
    </subcellularLocation>
</comment>
<comment type="alternative products">
    <event type="alternative splicing"/>
    <isoform>
        <id>P49653-1</id>
        <name>P2RX2-1</name>
        <sequence type="displayed"/>
    </isoform>
    <isoform>
        <id>P49653-2</id>
        <name>P2RX2-2</name>
        <sequence type="described" ref="VSP_004501 VSP_004502"/>
    </isoform>
    <isoform>
        <id>P49653-3</id>
        <name>P2RX2-3</name>
        <sequence type="described" ref="VSP_004500"/>
    </isoform>
    <text>Additional isoforms seem to exist.</text>
</comment>
<comment type="tissue specificity">
    <text>High levels in pituitary and vas deferens. Lower extent in spinal cord, bladder, brain, adrenal, testis, sensory epithelia from the inner ear.</text>
</comment>
<comment type="similarity">
    <text evidence="12">Belongs to the P2X receptor family.</text>
</comment>
<proteinExistence type="evidence at protein level"/>
<accession>P49653</accession>
<accession>O54868</accession>
<dbReference type="EMBL" id="U14414">
    <property type="protein sequence ID" value="AAA50756.1"/>
    <property type="molecule type" value="mRNA"/>
</dbReference>
<dbReference type="EMBL" id="Y09910">
    <property type="protein sequence ID" value="CAA71046.1"/>
    <property type="molecule type" value="Genomic_DNA"/>
</dbReference>
<dbReference type="EMBL" id="L43511">
    <property type="protein sequence ID" value="AAC42067.1"/>
    <property type="molecule type" value="mRNA"/>
</dbReference>
<dbReference type="EMBL" id="AF020756">
    <property type="protein sequence ID" value="AAB94570.1"/>
    <property type="molecule type" value="mRNA"/>
</dbReference>
<dbReference type="PIR" id="S50859">
    <property type="entry name" value="S50859"/>
</dbReference>
<dbReference type="RefSeq" id="NP_446108.2">
    <molecule id="P49653-1"/>
    <property type="nucleotide sequence ID" value="NM_053656.2"/>
</dbReference>
<dbReference type="SMR" id="P49653"/>
<dbReference type="CORUM" id="P49653"/>
<dbReference type="DIP" id="DIP-48329N"/>
<dbReference type="FunCoup" id="P49653">
    <property type="interactions" value="84"/>
</dbReference>
<dbReference type="IntAct" id="P49653">
    <property type="interactions" value="2"/>
</dbReference>
<dbReference type="MINT" id="P49653"/>
<dbReference type="STRING" id="10116.ENSRNOP00000053533"/>
<dbReference type="BindingDB" id="P49653"/>
<dbReference type="ChEMBL" id="CHEMBL2135"/>
<dbReference type="DrugCentral" id="P49653"/>
<dbReference type="GuidetoPHARMACOLOGY" id="479"/>
<dbReference type="TCDB" id="1.A.7.1.2">
    <property type="family name" value="the atp-gated p2x receptor cation channel (p2x receptor) family"/>
</dbReference>
<dbReference type="GlyCosmos" id="P49653">
    <property type="glycosylation" value="3 sites, No reported glycans"/>
</dbReference>
<dbReference type="GlyGen" id="P49653">
    <property type="glycosylation" value="5 sites"/>
</dbReference>
<dbReference type="iPTMnet" id="P49653"/>
<dbReference type="PhosphoSitePlus" id="P49653"/>
<dbReference type="PaxDb" id="10116-ENSRNOP00000053533"/>
<dbReference type="Ensembl" id="ENSRNOT00000056693.4">
    <molecule id="P49653-3"/>
    <property type="protein sequence ID" value="ENSRNOP00000053532.2"/>
    <property type="gene ID" value="ENSRNOG00000037456.6"/>
</dbReference>
<dbReference type="GeneID" id="114115"/>
<dbReference type="KEGG" id="rno:114115"/>
<dbReference type="UCSC" id="RGD:620251">
    <molecule id="P49653-1"/>
    <property type="organism name" value="rat"/>
</dbReference>
<dbReference type="AGR" id="RGD:620251"/>
<dbReference type="CTD" id="22953"/>
<dbReference type="RGD" id="620251">
    <property type="gene designation" value="P2rx2"/>
</dbReference>
<dbReference type="VEuPathDB" id="HostDB:ENSRNOG00000037456"/>
<dbReference type="eggNOG" id="ENOG502QVP9">
    <property type="taxonomic scope" value="Eukaryota"/>
</dbReference>
<dbReference type="GeneTree" id="ENSGT01020000230351"/>
<dbReference type="InParanoid" id="P49653"/>
<dbReference type="PhylomeDB" id="P49653"/>
<dbReference type="Reactome" id="R-RNO-139853">
    <property type="pathway name" value="Elevation of cytosolic Ca2+ levels"/>
</dbReference>
<dbReference type="Reactome" id="R-RNO-418346">
    <property type="pathway name" value="Platelet homeostasis"/>
</dbReference>
<dbReference type="PRO" id="PR:P49653"/>
<dbReference type="Proteomes" id="UP000002494">
    <property type="component" value="Chromosome 12"/>
</dbReference>
<dbReference type="Bgee" id="ENSRNOG00000037456">
    <property type="expression patterns" value="Expressed in testis and 16 other cell types or tissues"/>
</dbReference>
<dbReference type="ExpressionAtlas" id="P49653">
    <property type="expression patterns" value="baseline and differential"/>
</dbReference>
<dbReference type="GO" id="GO:0016324">
    <property type="term" value="C:apical plasma membrane"/>
    <property type="evidence" value="ECO:0000266"/>
    <property type="project" value="RGD"/>
</dbReference>
<dbReference type="GO" id="GO:0009986">
    <property type="term" value="C:cell surface"/>
    <property type="evidence" value="ECO:0000314"/>
    <property type="project" value="RGD"/>
</dbReference>
<dbReference type="GO" id="GO:0043197">
    <property type="term" value="C:dendritic spine"/>
    <property type="evidence" value="ECO:0000314"/>
    <property type="project" value="RGD"/>
</dbReference>
<dbReference type="GO" id="GO:0098978">
    <property type="term" value="C:glutamatergic synapse"/>
    <property type="evidence" value="ECO:0000314"/>
    <property type="project" value="SynGO"/>
</dbReference>
<dbReference type="GO" id="GO:0043025">
    <property type="term" value="C:neuronal cell body"/>
    <property type="evidence" value="ECO:0000314"/>
    <property type="project" value="ARUK-UCL"/>
</dbReference>
<dbReference type="GO" id="GO:0098992">
    <property type="term" value="C:neuronal dense core vesicle"/>
    <property type="evidence" value="ECO:0000266"/>
    <property type="project" value="RGD"/>
</dbReference>
<dbReference type="GO" id="GO:0098688">
    <property type="term" value="C:parallel fiber to Purkinje cell synapse"/>
    <property type="evidence" value="ECO:0000314"/>
    <property type="project" value="SynGO"/>
</dbReference>
<dbReference type="GO" id="GO:0005886">
    <property type="term" value="C:plasma membrane"/>
    <property type="evidence" value="ECO:0000314"/>
    <property type="project" value="BHF-UCL"/>
</dbReference>
<dbReference type="GO" id="GO:0098839">
    <property type="term" value="C:postsynaptic density membrane"/>
    <property type="evidence" value="ECO:0000314"/>
    <property type="project" value="SynGO"/>
</dbReference>
<dbReference type="GO" id="GO:0048787">
    <property type="term" value="C:presynaptic active zone membrane"/>
    <property type="evidence" value="ECO:0000314"/>
    <property type="project" value="SynGO"/>
</dbReference>
<dbReference type="GO" id="GO:0042734">
    <property type="term" value="C:presynaptic membrane"/>
    <property type="evidence" value="ECO:0000314"/>
    <property type="project" value="RGD"/>
</dbReference>
<dbReference type="GO" id="GO:0043235">
    <property type="term" value="C:receptor complex"/>
    <property type="evidence" value="ECO:0000314"/>
    <property type="project" value="ARUK-UCL"/>
</dbReference>
<dbReference type="GO" id="GO:0098685">
    <property type="term" value="C:Schaffer collateral - CA1 synapse"/>
    <property type="evidence" value="ECO:0000314"/>
    <property type="project" value="SynGO"/>
</dbReference>
<dbReference type="GO" id="GO:0043195">
    <property type="term" value="C:terminal bouton"/>
    <property type="evidence" value="ECO:0000314"/>
    <property type="project" value="RGD"/>
</dbReference>
<dbReference type="GO" id="GO:0005524">
    <property type="term" value="F:ATP binding"/>
    <property type="evidence" value="ECO:0000314"/>
    <property type="project" value="RGD"/>
</dbReference>
<dbReference type="GO" id="GO:0046870">
    <property type="term" value="F:cadmium ion binding"/>
    <property type="evidence" value="ECO:0000314"/>
    <property type="project" value="RGD"/>
</dbReference>
<dbReference type="GO" id="GO:0050897">
    <property type="term" value="F:cobalt ion binding"/>
    <property type="evidence" value="ECO:0000314"/>
    <property type="project" value="RGD"/>
</dbReference>
<dbReference type="GO" id="GO:0005507">
    <property type="term" value="F:copper ion binding"/>
    <property type="evidence" value="ECO:0000314"/>
    <property type="project" value="RGD"/>
</dbReference>
<dbReference type="GO" id="GO:0004931">
    <property type="term" value="F:extracellularly ATP-gated monoatomic cation channel activity"/>
    <property type="evidence" value="ECO:0000314"/>
    <property type="project" value="RGD"/>
</dbReference>
<dbReference type="GO" id="GO:0042802">
    <property type="term" value="F:identical protein binding"/>
    <property type="evidence" value="ECO:0000353"/>
    <property type="project" value="IntAct"/>
</dbReference>
<dbReference type="GO" id="GO:0015276">
    <property type="term" value="F:ligand-gated monoatomic ion channel activity"/>
    <property type="evidence" value="ECO:0000314"/>
    <property type="project" value="RGD"/>
</dbReference>
<dbReference type="GO" id="GO:0045340">
    <property type="term" value="F:mercury ion binding"/>
    <property type="evidence" value="ECO:0000314"/>
    <property type="project" value="RGD"/>
</dbReference>
<dbReference type="GO" id="GO:0016151">
    <property type="term" value="F:nickel cation binding"/>
    <property type="evidence" value="ECO:0000314"/>
    <property type="project" value="RGD"/>
</dbReference>
<dbReference type="GO" id="GO:0035091">
    <property type="term" value="F:phosphatidylinositol binding"/>
    <property type="evidence" value="ECO:0000315"/>
    <property type="project" value="RGD"/>
</dbReference>
<dbReference type="GO" id="GO:0044877">
    <property type="term" value="F:protein-containing complex binding"/>
    <property type="evidence" value="ECO:0000314"/>
    <property type="project" value="RGD"/>
</dbReference>
<dbReference type="GO" id="GO:0001614">
    <property type="term" value="F:purinergic nucleotide receptor activity"/>
    <property type="evidence" value="ECO:0007669"/>
    <property type="project" value="InterPro"/>
</dbReference>
<dbReference type="GO" id="GO:0008270">
    <property type="term" value="F:zinc ion binding"/>
    <property type="evidence" value="ECO:0000314"/>
    <property type="project" value="RGD"/>
</dbReference>
<dbReference type="GO" id="GO:0048266">
    <property type="term" value="P:behavioral response to pain"/>
    <property type="evidence" value="ECO:0000266"/>
    <property type="project" value="RGD"/>
</dbReference>
<dbReference type="GO" id="GO:0070588">
    <property type="term" value="P:calcium ion transmembrane transport"/>
    <property type="evidence" value="ECO:0000318"/>
    <property type="project" value="GO_Central"/>
</dbReference>
<dbReference type="GO" id="GO:0007268">
    <property type="term" value="P:chemical synaptic transmission"/>
    <property type="evidence" value="ECO:0000266"/>
    <property type="project" value="RGD"/>
</dbReference>
<dbReference type="GO" id="GO:0003029">
    <property type="term" value="P:detection of hypoxic conditions in blood by carotid body chemoreceptor signaling"/>
    <property type="evidence" value="ECO:0000266"/>
    <property type="project" value="RGD"/>
</dbReference>
<dbReference type="GO" id="GO:0007528">
    <property type="term" value="P:neuromuscular junction development"/>
    <property type="evidence" value="ECO:0000266"/>
    <property type="project" value="RGD"/>
</dbReference>
<dbReference type="GO" id="GO:0007274">
    <property type="term" value="P:neuromuscular synaptic transmission"/>
    <property type="evidence" value="ECO:0000266"/>
    <property type="project" value="RGD"/>
</dbReference>
<dbReference type="GO" id="GO:0019228">
    <property type="term" value="P:neuronal action potential"/>
    <property type="evidence" value="ECO:0000314"/>
    <property type="project" value="RGD"/>
</dbReference>
<dbReference type="GO" id="GO:0030432">
    <property type="term" value="P:peristalsis"/>
    <property type="evidence" value="ECO:0000266"/>
    <property type="project" value="RGD"/>
</dbReference>
<dbReference type="GO" id="GO:0099509">
    <property type="term" value="P:regulation of presynaptic cytosolic calcium ion concentration"/>
    <property type="evidence" value="ECO:0000314"/>
    <property type="project" value="SynGO"/>
</dbReference>
<dbReference type="GO" id="GO:2000300">
    <property type="term" value="P:regulation of synaptic vesicle exocytosis"/>
    <property type="evidence" value="ECO:0000314"/>
    <property type="project" value="SynGO"/>
</dbReference>
<dbReference type="GO" id="GO:0033198">
    <property type="term" value="P:response to ATP"/>
    <property type="evidence" value="ECO:0000266"/>
    <property type="project" value="RGD"/>
</dbReference>
<dbReference type="GO" id="GO:0009743">
    <property type="term" value="P:response to carbohydrate"/>
    <property type="evidence" value="ECO:0000266"/>
    <property type="project" value="RGD"/>
</dbReference>
<dbReference type="GO" id="GO:0001666">
    <property type="term" value="P:response to hypoxia"/>
    <property type="evidence" value="ECO:0000266"/>
    <property type="project" value="RGD"/>
</dbReference>
<dbReference type="GO" id="GO:0002931">
    <property type="term" value="P:response to ischemia"/>
    <property type="evidence" value="ECO:0000315"/>
    <property type="project" value="ARUK-UCL"/>
</dbReference>
<dbReference type="GO" id="GO:0007605">
    <property type="term" value="P:sensory perception of sound"/>
    <property type="evidence" value="ECO:0000266"/>
    <property type="project" value="RGD"/>
</dbReference>
<dbReference type="GO" id="GO:0050909">
    <property type="term" value="P:sensory perception of taste"/>
    <property type="evidence" value="ECO:0000266"/>
    <property type="project" value="RGD"/>
</dbReference>
<dbReference type="GO" id="GO:0048741">
    <property type="term" value="P:skeletal muscle fiber development"/>
    <property type="evidence" value="ECO:0000266"/>
    <property type="project" value="RGD"/>
</dbReference>
<dbReference type="GO" id="GO:0014832">
    <property type="term" value="P:urinary bladder smooth muscle contraction"/>
    <property type="evidence" value="ECO:0000266"/>
    <property type="project" value="RGD"/>
</dbReference>
<dbReference type="FunFam" id="1.10.287.940:FF:000008">
    <property type="entry name" value="P2X purinoceptor"/>
    <property type="match status" value="1"/>
</dbReference>
<dbReference type="FunFam" id="2.60.490.10:FF:000001">
    <property type="entry name" value="P2X purinoceptor"/>
    <property type="match status" value="1"/>
</dbReference>
<dbReference type="Gene3D" id="1.10.287.940">
    <property type="entry name" value="atp-gated p2x4 ion channel"/>
    <property type="match status" value="1"/>
</dbReference>
<dbReference type="Gene3D" id="2.60.490.10">
    <property type="entry name" value="atp-gated p2x4 ion channel domain"/>
    <property type="match status" value="1"/>
</dbReference>
<dbReference type="InterPro" id="IPR003045">
    <property type="entry name" value="P2X2_purnocptor"/>
</dbReference>
<dbReference type="InterPro" id="IPR027309">
    <property type="entry name" value="P2X_extracellular_dom_sf"/>
</dbReference>
<dbReference type="InterPro" id="IPR001429">
    <property type="entry name" value="P2X_purnocptor"/>
</dbReference>
<dbReference type="InterPro" id="IPR053792">
    <property type="entry name" value="P2X_RECEPTOR_CS"/>
</dbReference>
<dbReference type="NCBIfam" id="TIGR00863">
    <property type="entry name" value="P2X"/>
    <property type="match status" value="1"/>
</dbReference>
<dbReference type="PANTHER" id="PTHR10125">
    <property type="entry name" value="P2X PURINOCEPTOR"/>
    <property type="match status" value="1"/>
</dbReference>
<dbReference type="PANTHER" id="PTHR10125:SF4">
    <property type="entry name" value="P2X PURINOCEPTOR 2"/>
    <property type="match status" value="1"/>
</dbReference>
<dbReference type="Pfam" id="PF00864">
    <property type="entry name" value="P2X_receptor"/>
    <property type="match status" value="1"/>
</dbReference>
<dbReference type="PIRSF" id="PIRSF005713">
    <property type="entry name" value="P2X_purinoceptor"/>
    <property type="match status" value="1"/>
</dbReference>
<dbReference type="PRINTS" id="PR01309">
    <property type="entry name" value="P2X2RECEPTOR"/>
</dbReference>
<dbReference type="PRINTS" id="PR01307">
    <property type="entry name" value="P2XRECEPTOR"/>
</dbReference>
<dbReference type="PROSITE" id="PS01212">
    <property type="entry name" value="P2X_RECEPTOR"/>
    <property type="match status" value="1"/>
</dbReference>
<evidence type="ECO:0000250" key="1">
    <source>
        <dbReference type="UniProtKB" id="P56373"/>
    </source>
</evidence>
<evidence type="ECO:0000250" key="2">
    <source>
        <dbReference type="UniProtKB" id="Q9UBL9"/>
    </source>
</evidence>
<evidence type="ECO:0000255" key="3"/>
<evidence type="ECO:0000256" key="4">
    <source>
        <dbReference type="SAM" id="MobiDB-lite"/>
    </source>
</evidence>
<evidence type="ECO:0000269" key="5">
    <source>
    </source>
</evidence>
<evidence type="ECO:0000269" key="6">
    <source>
    </source>
</evidence>
<evidence type="ECO:0000269" key="7">
    <source>
    </source>
</evidence>
<evidence type="ECO:0000269" key="8">
    <source>
    </source>
</evidence>
<evidence type="ECO:0000269" key="9">
    <source>
    </source>
</evidence>
<evidence type="ECO:0000269" key="10">
    <source>
    </source>
</evidence>
<evidence type="ECO:0000269" key="11">
    <source>
    </source>
</evidence>
<evidence type="ECO:0000305" key="12"/>
<keyword id="KW-0025">Alternative splicing</keyword>
<keyword id="KW-0067">ATP-binding</keyword>
<keyword id="KW-1003">Cell membrane</keyword>
<keyword id="KW-1015">Disulfide bond</keyword>
<keyword id="KW-0325">Glycoprotein</keyword>
<keyword id="KW-0407">Ion channel</keyword>
<keyword id="KW-0406">Ion transport</keyword>
<keyword id="KW-1071">Ligand-gated ion channel</keyword>
<keyword id="KW-0472">Membrane</keyword>
<keyword id="KW-0547">Nucleotide-binding</keyword>
<keyword id="KW-0675">Receptor</keyword>
<keyword id="KW-1185">Reference proteome</keyword>
<keyword id="KW-0812">Transmembrane</keyword>
<keyword id="KW-1133">Transmembrane helix</keyword>
<keyword id="KW-0813">Transport</keyword>
<organism>
    <name type="scientific">Rattus norvegicus</name>
    <name type="common">Rat</name>
    <dbReference type="NCBI Taxonomy" id="10116"/>
    <lineage>
        <taxon>Eukaryota</taxon>
        <taxon>Metazoa</taxon>
        <taxon>Chordata</taxon>
        <taxon>Craniata</taxon>
        <taxon>Vertebrata</taxon>
        <taxon>Euteleostomi</taxon>
        <taxon>Mammalia</taxon>
        <taxon>Eutheria</taxon>
        <taxon>Euarchontoglires</taxon>
        <taxon>Glires</taxon>
        <taxon>Rodentia</taxon>
        <taxon>Myomorpha</taxon>
        <taxon>Muroidea</taxon>
        <taxon>Muridae</taxon>
        <taxon>Murinae</taxon>
        <taxon>Rattus</taxon>
    </lineage>
</organism>
<reference key="1">
    <citation type="journal article" date="1994" name="Nature">
        <title>New structural motif for ligand-gated ion channels defined by an ionotropic ATP receptor.</title>
        <authorList>
            <person name="Brake A.J."/>
            <person name="Wagenbach M.J."/>
            <person name="Julius D."/>
        </authorList>
    </citation>
    <scope>NUCLEOTIDE SEQUENCE [MRNA]</scope>
</reference>
<reference key="2">
    <citation type="journal article" date="1997" name="FEBS Lett.">
        <title>Desensitization of the P2X(2) receptor controlled by alternative splicing.</title>
        <authorList>
            <person name="Braendle U."/>
            <person name="Spielmanns P."/>
            <person name="Osteroth R."/>
            <person name="Sim J."/>
            <person name="Surprenant A."/>
            <person name="Buell G."/>
            <person name="Ruppersberg J.P."/>
            <person name="Plinkert P.K."/>
            <person name="Zenner H.P."/>
            <person name="Glowatzki E."/>
        </authorList>
    </citation>
    <scope>NUCLEOTIDE SEQUENCE [GENOMIC DNA]</scope>
    <scope>FUNCTION</scope>
    <scope>ACTIVITY REGULATION</scope>
    <source>
        <strain>Wistar</strain>
        <tissue>Liver</tissue>
    </source>
</reference>
<reference key="3">
    <citation type="journal article" date="1995" name="Biochem. Biophys. Res. Commun.">
        <title>Identification of a short form of the P2xR1-purinoceptor subunit produced by alternative splicing in the pituitary and cochlea.</title>
        <authorList>
            <person name="Housley G.D."/>
            <person name="Greenwood D."/>
            <person name="Bennett T."/>
            <person name="Ryan A.F."/>
        </authorList>
    </citation>
    <scope>NUCLEOTIDE SEQUENCE [MRNA] OF 326-340</scope>
    <scope>ALTERNATIVE SPLICING</scope>
    <source>
        <strain>Sprague-Dawley</strain>
        <strain>Wistar</strain>
        <tissue>Vas deferens</tissue>
    </source>
</reference>
<reference key="4">
    <citation type="submission" date="1997-08" db="EMBL/GenBank/DDBJ databases">
        <authorList>
            <person name="Koshimizu T."/>
            <person name="Tomic M."/>
            <person name="van Goor F."/>
            <person name="Stojilkovic S.S."/>
        </authorList>
    </citation>
    <scope>NUCLEOTIDE SEQUENCE [MRNA] (ISOFORM P2RX2-3)</scope>
    <source>
        <strain>Sprague-Dawley</strain>
        <tissue>Pituitary</tissue>
    </source>
</reference>
<reference key="5">
    <citation type="journal article" date="1996" name="J. Physiol. (Lond.)">
        <title>Ionic permeability of, and divalent cation effects on, two ATP-gated cation channels (P2X receptors) expressed in mammalian cells.</title>
        <authorList>
            <person name="Evans R.J."/>
            <person name="Lewis C."/>
            <person name="Virginio C."/>
            <person name="Lundstrom K."/>
            <person name="Buell G."/>
            <person name="Surprenant A."/>
            <person name="North R.A."/>
        </authorList>
    </citation>
    <scope>FUNCTION</scope>
    <scope>TRANSPORTER ACTIVITY</scope>
</reference>
<reference key="6">
    <citation type="journal article" date="2001" name="J. Pharmacol. Exp. Ther.">
        <title>Coexpression of P2X(3) and P2X(2) receptor subunits in varying amounts generates heterogeneous populations of P2X receptors that evoke a spectrum of agonist responses comparable to that seen in sensory neurons.</title>
        <authorList>
            <person name="Liu M."/>
            <person name="King B.F."/>
            <person name="Dunn P.M."/>
            <person name="Rong W."/>
            <person name="Townsend-Nicholson A."/>
            <person name="Burnstock G."/>
        </authorList>
    </citation>
    <scope>SUBUNIT</scope>
    <scope>INTERACTION WITH P2XR3</scope>
</reference>
<reference key="7">
    <citation type="journal article" date="1999" name="Eur. J. Pharmacol.">
        <title>Pharmacological characterization of recombinant human and rat P2X receptor subtypes.</title>
        <authorList>
            <person name="Bianchi B.R."/>
            <person name="Lynch K.J."/>
            <person name="Touma E."/>
            <person name="Niforatos W."/>
            <person name="Burgard E.C."/>
            <person name="Alexander K.M."/>
            <person name="Park H.S."/>
            <person name="Yu H."/>
            <person name="Metzger R."/>
            <person name="Kowaluk E."/>
            <person name="Jarvis M.F."/>
            <person name="van Biesen T."/>
        </authorList>
    </citation>
    <scope>FUNCTION</scope>
    <scope>TRANSPORTER ACTIVITY</scope>
    <scope>ACTIVITY REGULATION</scope>
</reference>
<reference key="8">
    <citation type="journal article" date="2003" name="Eur. J. Pharmacol.">
        <title>Intracellular disulfide bond that affects ATP responsiveness of P2X(2) receptor/channel.</title>
        <authorList>
            <person name="Nakazawa K."/>
            <person name="Ojima H."/>
            <person name="Ishii-Nozawa R."/>
            <person name="Takeuchi K."/>
            <person name="Ohno Y."/>
        </authorList>
    </citation>
    <scope>DISULFIDE BOND</scope>
</reference>
<reference key="9">
    <citation type="journal article" date="2004" name="J. Mol. Biol.">
        <title>Trimeric architecture of homomeric P2X2 and heteromeric P2X1+2 receptor subtypes.</title>
        <authorList>
            <person name="Aschrafi A."/>
            <person name="Sadtler S."/>
            <person name="Niculescu C."/>
            <person name="Rettinger J."/>
            <person name="Schmalzing G."/>
        </authorList>
    </citation>
    <scope>SUBUNIT</scope>
    <scope>INTERACTION WITH P2XR1</scope>
    <scope>SUBCELLULAR LOCATION</scope>
</reference>
<reference key="10">
    <citation type="journal article" date="2007" name="Biophys. J.">
        <title>The stoichiometry of P2X2/6 receptor heteromers depends on relative subunit expression levels.</title>
        <authorList>
            <person name="Barrera N.P."/>
            <person name="Henderson R.M."/>
            <person name="Murrell-Lagnado R.D."/>
            <person name="Edwardson J.M."/>
        </authorList>
    </citation>
    <scope>SUBUNIT</scope>
    <scope>INTERACTION WITH P2XR6</scope>
</reference>
<feature type="chain" id="PRO_0000161550" description="P2X purinoceptor 2">
    <location>
        <begin position="1"/>
        <end position="472"/>
    </location>
</feature>
<feature type="topological domain" description="Cytoplasmic" evidence="1">
    <location>
        <begin position="1"/>
        <end position="34"/>
    </location>
</feature>
<feature type="transmembrane region" description="Helical; Name=1" evidence="1">
    <location>
        <begin position="35"/>
        <end position="52"/>
    </location>
</feature>
<feature type="topological domain" description="Extracellular" evidence="1">
    <location>
        <begin position="53"/>
        <end position="326"/>
    </location>
</feature>
<feature type="transmembrane region" description="Helical; Name=2" evidence="1">
    <location>
        <begin position="327"/>
        <end position="347"/>
    </location>
</feature>
<feature type="topological domain" description="Cytoplasmic" evidence="1">
    <location>
        <begin position="348"/>
        <end position="472"/>
    </location>
</feature>
<feature type="region of interest" description="Pore-forming motif" evidence="3">
    <location>
        <begin position="309"/>
        <end position="322"/>
    </location>
</feature>
<feature type="region of interest" description="Disordered" evidence="4">
    <location>
        <begin position="393"/>
        <end position="472"/>
    </location>
</feature>
<feature type="compositionally biased region" description="Polar residues" evidence="4">
    <location>
        <begin position="456"/>
        <end position="465"/>
    </location>
</feature>
<feature type="binding site" evidence="1">
    <location>
        <position position="69"/>
    </location>
    <ligand>
        <name>ATP</name>
        <dbReference type="ChEBI" id="CHEBI:30616"/>
    </ligand>
</feature>
<feature type="binding site" evidence="1">
    <location>
        <position position="71"/>
    </location>
    <ligand>
        <name>ATP</name>
        <dbReference type="ChEBI" id="CHEBI:30616"/>
    </ligand>
</feature>
<feature type="binding site" evidence="1">
    <location>
        <position position="184"/>
    </location>
    <ligand>
        <name>ATP</name>
        <dbReference type="ChEBI" id="CHEBI:30616"/>
    </ligand>
</feature>
<feature type="binding site" evidence="1">
    <location>
        <position position="284"/>
    </location>
    <ligand>
        <name>ATP</name>
        <dbReference type="ChEBI" id="CHEBI:30616"/>
    </ligand>
</feature>
<feature type="binding site" evidence="1">
    <location>
        <position position="288"/>
    </location>
    <ligand>
        <name>ATP</name>
        <dbReference type="ChEBI" id="CHEBI:30616"/>
    </ligand>
</feature>
<feature type="binding site" evidence="1">
    <location>
        <position position="290"/>
    </location>
    <ligand>
        <name>ATP</name>
        <dbReference type="ChEBI" id="CHEBI:30616"/>
    </ligand>
</feature>
<feature type="binding site" evidence="1">
    <location>
        <position position="308"/>
    </location>
    <ligand>
        <name>ATP</name>
        <dbReference type="ChEBI" id="CHEBI:30616"/>
    </ligand>
</feature>
<feature type="glycosylation site" description="N-linked (GlcNAc...) asparagine" evidence="3">
    <location>
        <position position="182"/>
    </location>
</feature>
<feature type="glycosylation site" description="N-linked (GlcNAc...) asparagine" evidence="3">
    <location>
        <position position="239"/>
    </location>
</feature>
<feature type="glycosylation site" description="N-linked (GlcNAc...) asparagine" evidence="3">
    <location>
        <position position="298"/>
    </location>
</feature>
<feature type="disulfide bond" evidence="7">
    <location>
        <begin position="9"/>
        <end position="430"/>
    </location>
</feature>
<feature type="disulfide bond" evidence="1">
    <location>
        <begin position="113"/>
        <end position="164"/>
    </location>
</feature>
<feature type="disulfide bond" evidence="1">
    <location>
        <begin position="124"/>
        <end position="147"/>
    </location>
</feature>
<feature type="disulfide bond" evidence="1">
    <location>
        <begin position="130"/>
        <end position="158"/>
    </location>
</feature>
<feature type="disulfide bond" evidence="1">
    <location>
        <begin position="214"/>
        <end position="224"/>
    </location>
</feature>
<feature type="disulfide bond" evidence="1">
    <location>
        <begin position="258"/>
        <end position="267"/>
    </location>
</feature>
<feature type="splice variant" id="VSP_004500" description="In isoform P2RX2-3." evidence="12">
    <location>
        <begin position="173"/>
        <end position="199"/>
    </location>
</feature>
<feature type="splice variant" id="VSP_004501" description="In isoform P2RX2-2." evidence="12">
    <original>GSFLCDWILLTFMNKNK</original>
    <variation>VRNPNSLGDLGQVGSVW</variation>
    <location>
        <begin position="344"/>
        <end position="360"/>
    </location>
</feature>
<feature type="splice variant" id="VSP_004502" description="In isoform P2RX2-2." evidence="12">
    <location>
        <begin position="361"/>
        <end position="472"/>
    </location>
</feature>
<protein>
    <recommendedName>
        <fullName>P2X purinoceptor 2</fullName>
        <shortName>P2X2</shortName>
    </recommendedName>
    <alternativeName>
        <fullName>ATP receptor</fullName>
    </alternativeName>
    <alternativeName>
        <fullName>Purinergic receptor</fullName>
    </alternativeName>
</protein>
<name>P2RX2_RAT</name>
<gene>
    <name type="primary">P2rx2</name>
</gene>
<sequence length="472" mass="52617">MVRRLARGCWSAFWDYETPKVIVVRNRRLGFVHRMVQLLILLYFVWYVFIVQKSYQDSETGPESSIITKVKGITMSEDKVWDVEEYVKPPEGGSVVSIITRIEVTPSQTLGTCPESMRVHSSTCHSDDDCIAGQLDMQGNGIRTGHCVPYYHGDSKTCEVSAWCPVEDGTSDNHFLGKMAPNFTILIKNSIHYPKFKFSKGNIASQKSDYLKHCTFDQDSDPYCPIFRLGFIVEKAGENFTELAHKGGVIGVIINWNCDLDLSESECNPKYSFRRLDPKYDPASSGYNFRFAKYYKINGTTTTRTLIKAYGIRIDVIVHGQAGKFSLIPTIINLATALTSIGVGSFLCDWILLTFMNKNKLYSHKKFDKVRTPKHPSSRWPVTLALVLGQIPPPPSHYSQDQPPSPPSGEGPTLGEGAELPLAVQSPRPCSISALTEQVVDTLGQHMGQRPPVPEPSQQDSTSTDPKGLAQL</sequence>